<protein>
    <recommendedName>
        <fullName evidence="1">ATP synthase subunit delta</fullName>
    </recommendedName>
    <alternativeName>
        <fullName evidence="1">ATP synthase F(1) sector subunit delta</fullName>
    </alternativeName>
    <alternativeName>
        <fullName evidence="1">F-type ATPase subunit delta</fullName>
        <shortName evidence="1">F-ATPase subunit delta</shortName>
    </alternativeName>
</protein>
<proteinExistence type="inferred from homology"/>
<keyword id="KW-0066">ATP synthesis</keyword>
<keyword id="KW-1003">Cell membrane</keyword>
<keyword id="KW-0139">CF(1)</keyword>
<keyword id="KW-0375">Hydrogen ion transport</keyword>
<keyword id="KW-0406">Ion transport</keyword>
<keyword id="KW-0472">Membrane</keyword>
<keyword id="KW-1185">Reference proteome</keyword>
<keyword id="KW-0813">Transport</keyword>
<feature type="chain" id="PRO_0000382097" description="ATP synthase subunit delta">
    <location>
        <begin position="1"/>
        <end position="175"/>
    </location>
</feature>
<evidence type="ECO:0000255" key="1">
    <source>
        <dbReference type="HAMAP-Rule" id="MF_01416"/>
    </source>
</evidence>
<organism>
    <name type="scientific">Elusimicrobium minutum (strain Pei191)</name>
    <dbReference type="NCBI Taxonomy" id="445932"/>
    <lineage>
        <taxon>Bacteria</taxon>
        <taxon>Pseudomonadati</taxon>
        <taxon>Elusimicrobiota</taxon>
        <taxon>Elusimicrobia</taxon>
        <taxon>Elusimicrobiales</taxon>
        <taxon>Elusimicrobiaceae</taxon>
        <taxon>Elusimicrobium</taxon>
    </lineage>
</organism>
<sequence>MKSTDRILAHKYSIALSSLADKKDLPSLLAELKEIHLAIGNSSFFYSPAVPKKEKKQALSSALKTDNFLIKNTLFLLIDNKKLNLLGQIIIDLNKTIESFTNTVSAEVYCAREMDDKQQNAVIESLKKYFKANFINADFKQDKTLISGLKIKTADYVIDGSTKNNLQKLKQVLQD</sequence>
<reference key="1">
    <citation type="journal article" date="2009" name="Appl. Environ. Microbiol.">
        <title>Genomic analysis of 'Elusimicrobium minutum,' the first cultivated representative of the phylum 'Elusimicrobia' (formerly termite group 1).</title>
        <authorList>
            <person name="Herlemann D.P.R."/>
            <person name="Geissinger O."/>
            <person name="Ikeda-Ohtsubo W."/>
            <person name="Kunin V."/>
            <person name="Sun H."/>
            <person name="Lapidus A."/>
            <person name="Hugenholtz P."/>
            <person name="Brune A."/>
        </authorList>
    </citation>
    <scope>NUCLEOTIDE SEQUENCE [LARGE SCALE GENOMIC DNA]</scope>
    <source>
        <strain>Pei191</strain>
    </source>
</reference>
<name>ATPD_ELUMP</name>
<dbReference type="EMBL" id="CP001055">
    <property type="protein sequence ID" value="ACC99065.1"/>
    <property type="molecule type" value="Genomic_DNA"/>
</dbReference>
<dbReference type="RefSeq" id="WP_012415679.1">
    <property type="nucleotide sequence ID" value="NC_010644.1"/>
</dbReference>
<dbReference type="SMR" id="B2KEW9"/>
<dbReference type="STRING" id="445932.Emin_1518"/>
<dbReference type="KEGG" id="emi:Emin_1518"/>
<dbReference type="HOGENOM" id="CLU_085114_4_2_0"/>
<dbReference type="OrthoDB" id="9786633at2"/>
<dbReference type="Proteomes" id="UP000001029">
    <property type="component" value="Chromosome"/>
</dbReference>
<dbReference type="GO" id="GO:0005886">
    <property type="term" value="C:plasma membrane"/>
    <property type="evidence" value="ECO:0007669"/>
    <property type="project" value="UniProtKB-SubCell"/>
</dbReference>
<dbReference type="GO" id="GO:0045259">
    <property type="term" value="C:proton-transporting ATP synthase complex"/>
    <property type="evidence" value="ECO:0007669"/>
    <property type="project" value="UniProtKB-KW"/>
</dbReference>
<dbReference type="GO" id="GO:0046933">
    <property type="term" value="F:proton-transporting ATP synthase activity, rotational mechanism"/>
    <property type="evidence" value="ECO:0007669"/>
    <property type="project" value="UniProtKB-UniRule"/>
</dbReference>
<dbReference type="Gene3D" id="1.10.520.20">
    <property type="entry name" value="N-terminal domain of the delta subunit of the F1F0-ATP synthase"/>
    <property type="match status" value="1"/>
</dbReference>
<dbReference type="HAMAP" id="MF_01416">
    <property type="entry name" value="ATP_synth_delta_bact"/>
    <property type="match status" value="1"/>
</dbReference>
<dbReference type="InterPro" id="IPR026015">
    <property type="entry name" value="ATP_synth_OSCP/delta_N_sf"/>
</dbReference>
<dbReference type="InterPro" id="IPR000711">
    <property type="entry name" value="ATPase_OSCP/dsu"/>
</dbReference>
<dbReference type="NCBIfam" id="TIGR01145">
    <property type="entry name" value="ATP_synt_delta"/>
    <property type="match status" value="1"/>
</dbReference>
<dbReference type="PANTHER" id="PTHR11910">
    <property type="entry name" value="ATP SYNTHASE DELTA CHAIN"/>
    <property type="match status" value="1"/>
</dbReference>
<dbReference type="Pfam" id="PF00213">
    <property type="entry name" value="OSCP"/>
    <property type="match status" value="1"/>
</dbReference>
<dbReference type="PRINTS" id="PR00125">
    <property type="entry name" value="ATPASEDELTA"/>
</dbReference>
<dbReference type="SUPFAM" id="SSF47928">
    <property type="entry name" value="N-terminal domain of the delta subunit of the F1F0-ATP synthase"/>
    <property type="match status" value="1"/>
</dbReference>
<comment type="function">
    <text evidence="1">F(1)F(0) ATP synthase produces ATP from ADP in the presence of a proton or sodium gradient. F-type ATPases consist of two structural domains, F(1) containing the extramembraneous catalytic core and F(0) containing the membrane proton channel, linked together by a central stalk and a peripheral stalk. During catalysis, ATP synthesis in the catalytic domain of F(1) is coupled via a rotary mechanism of the central stalk subunits to proton translocation.</text>
</comment>
<comment type="function">
    <text evidence="1">This protein is part of the stalk that links CF(0) to CF(1). It either transmits conformational changes from CF(0) to CF(1) or is implicated in proton conduction.</text>
</comment>
<comment type="subunit">
    <text evidence="1">F-type ATPases have 2 components, F(1) - the catalytic core - and F(0) - the membrane proton channel. F(1) has five subunits: alpha(3), beta(3), gamma(1), delta(1), epsilon(1). F(0) has three main subunits: a(1), b(2) and c(10-14). The alpha and beta chains form an alternating ring which encloses part of the gamma chain. F(1) is attached to F(0) by a central stalk formed by the gamma and epsilon chains, while a peripheral stalk is formed by the delta and b chains.</text>
</comment>
<comment type="subcellular location">
    <subcellularLocation>
        <location evidence="1">Cell membrane</location>
        <topology evidence="1">Peripheral membrane protein</topology>
    </subcellularLocation>
</comment>
<comment type="similarity">
    <text evidence="1">Belongs to the ATPase delta chain family.</text>
</comment>
<accession>B2KEW9</accession>
<gene>
    <name evidence="1" type="primary">atpH</name>
    <name type="ordered locus">Emin_1518</name>
</gene>